<sequence length="176" mass="20965">MPDSWDKDVYPEPPRRTPAPSPQTSLPNPITYLTKAFDLLVDRPVTLVREFIERQHAKNKYYYYHREFRRVPDITECQEKDVLCMFEAEMQWRRDYKVDQEIVNIIQERLKACQQREGESHRQNCAKELEQFTQVVKAYQDRYHDLGAHYSARKCLAKQKQRMLAERKAAKEAAAA</sequence>
<feature type="chain" id="PRO_0000118829" description="NADH dehydrogenase [ubiquinone] 1 beta subcomplex subunit 10">
    <location>
        <begin position="1"/>
        <end position="176"/>
    </location>
</feature>
<feature type="region of interest" description="Disordered" evidence="2">
    <location>
        <begin position="1"/>
        <end position="27"/>
    </location>
</feature>
<feature type="compositionally biased region" description="Basic and acidic residues" evidence="2">
    <location>
        <begin position="1"/>
        <end position="15"/>
    </location>
</feature>
<feature type="modified residue" description="Phosphoserine" evidence="1">
    <location>
        <position position="151"/>
    </location>
</feature>
<feature type="turn" evidence="9">
    <location>
        <begin position="7"/>
        <end position="9"/>
    </location>
</feature>
<feature type="strand" evidence="10">
    <location>
        <begin position="24"/>
        <end position="26"/>
    </location>
</feature>
<feature type="helix" evidence="9">
    <location>
        <begin position="29"/>
        <end position="40"/>
    </location>
</feature>
<feature type="helix" evidence="9">
    <location>
        <begin position="42"/>
        <end position="58"/>
    </location>
</feature>
<feature type="strand" evidence="9">
    <location>
        <begin position="62"/>
        <end position="64"/>
    </location>
</feature>
<feature type="helix" evidence="9">
    <location>
        <begin position="74"/>
        <end position="76"/>
    </location>
</feature>
<feature type="helix" evidence="9">
    <location>
        <begin position="82"/>
        <end position="117"/>
    </location>
</feature>
<feature type="helix" evidence="9">
    <location>
        <begin position="118"/>
        <end position="120"/>
    </location>
</feature>
<feature type="helix" evidence="9">
    <location>
        <begin position="121"/>
        <end position="124"/>
    </location>
</feature>
<feature type="helix" evidence="9">
    <location>
        <begin position="126"/>
        <end position="143"/>
    </location>
</feature>
<feature type="helix" evidence="9">
    <location>
        <begin position="152"/>
        <end position="174"/>
    </location>
</feature>
<reference key="1">
    <citation type="journal article" date="1992" name="J. Mol. Biol.">
        <title>Sequences of 20 subunits of NADH:ubiquinone oxidoreductase from bovine heart mitochondria. Application of a novel strategy for sequencing proteins using the polymerase chain reaction.</title>
        <authorList>
            <person name="Walker J.E."/>
            <person name="Arizmendi J.M."/>
            <person name="Dupuis A."/>
            <person name="Fearnley I.M."/>
            <person name="Finel M."/>
            <person name="Medd S.M."/>
            <person name="Pilkington S.J."/>
            <person name="Runswick M.J."/>
            <person name="Skehel J.M."/>
        </authorList>
    </citation>
    <scope>NUCLEOTIDE SEQUENCE [MRNA]</scope>
    <scope>PARTIAL PROTEIN SEQUENCE</scope>
    <source>
        <tissue>Heart</tissue>
    </source>
</reference>
<reference key="2">
    <citation type="submission" date="2005-08" db="EMBL/GenBank/DDBJ databases">
        <authorList>
            <consortium name="NIH - Mammalian Gene Collection (MGC) project"/>
        </authorList>
    </citation>
    <scope>NUCLEOTIDE SEQUENCE [LARGE SCALE MRNA]</scope>
    <source>
        <strain>Crossbred X Angus</strain>
        <tissue>Ileum</tissue>
    </source>
</reference>
<reference key="3">
    <citation type="journal article" date="2000" name="Biochemistry">
        <title>Resolution of the membrane domain of bovine complex I into subcomplexes: implications for the structural organization of the enzyme.</title>
        <authorList>
            <person name="Sazanov L.A."/>
            <person name="Peak-Chew S.Y."/>
            <person name="Fearnley I.M."/>
            <person name="Walker J.E."/>
        </authorList>
    </citation>
    <scope>PARTIAL PROTEIN SEQUENCE</scope>
    <scope>SUBUNIT</scope>
    <scope>IDENTIFICATION IN COMPLEX I</scope>
    <scope>SUBCELLULAR LOCATION</scope>
</reference>
<reference key="4">
    <citation type="journal article" date="2008" name="Anal. Biochem.">
        <title>Subunit analysis of bovine heart complex I by reversed-phase high-performance liquid chromatography, electrospray ionization-tandem mass spectrometry, and matrix-assisted laser desorption/ionization-time-of-flight mass spectrometry.</title>
        <authorList>
            <person name="Lemma-Gray P."/>
            <person name="Valusova E."/>
            <person name="Carroll C.A."/>
            <person name="Weintraub S.T."/>
            <person name="Musatov A."/>
            <person name="Robinson N.C."/>
        </authorList>
    </citation>
    <scope>SUBUNIT</scope>
    <scope>IDENTIFICATION IN COMPLEX I</scope>
    <scope>SUBCELLULAR LOCATION</scope>
</reference>
<evidence type="ECO:0000250" key="1">
    <source>
        <dbReference type="UniProtKB" id="O96000"/>
    </source>
</evidence>
<evidence type="ECO:0000256" key="2">
    <source>
        <dbReference type="SAM" id="MobiDB-lite"/>
    </source>
</evidence>
<evidence type="ECO:0000269" key="3">
    <source>
    </source>
</evidence>
<evidence type="ECO:0000269" key="4">
    <source>
    </source>
</evidence>
<evidence type="ECO:0000269" key="5">
    <source>
    </source>
</evidence>
<evidence type="ECO:0000305" key="6"/>
<evidence type="ECO:0000305" key="7">
    <source>
    </source>
</evidence>
<evidence type="ECO:0000305" key="8">
    <source>
    </source>
</evidence>
<evidence type="ECO:0007829" key="9">
    <source>
        <dbReference type="PDB" id="7QSM"/>
    </source>
</evidence>
<evidence type="ECO:0007829" key="10">
    <source>
        <dbReference type="PDB" id="8Q1Y"/>
    </source>
</evidence>
<accession>Q02373</accession>
<accession>Q3ZC99</accession>
<gene>
    <name type="primary">NDUFB10</name>
</gene>
<name>NDUBA_BOVIN</name>
<comment type="function">
    <text evidence="1">Accessory subunit that is involved in the functional assembly of the mitochondrial respiratory chain complex I. Complex I has an NADH dehydrogenase activity with ubiquinone as an immediate electron acceptor and mediates the transfer of electrons from NADH to the respiratory chain.</text>
</comment>
<comment type="subunit">
    <text evidence="1 3 4 5">Complex I is composed of 45 different subunits (PubMed:10852722, PubMed:1518044, PubMed:18721790). Interacts with CHCHD4.</text>
</comment>
<comment type="subcellular location">
    <subcellularLocation>
        <location evidence="7 8">Mitochondrion inner membrane</location>
        <topology>Peripheral membrane protein</topology>
        <orientation>Matrix side</orientation>
    </subcellularLocation>
</comment>
<comment type="similarity">
    <text evidence="6">Belongs to the complex I NDUFB10 subunit family.</text>
</comment>
<dbReference type="EMBL" id="X63224">
    <property type="protein sequence ID" value="CAA44909.1"/>
    <property type="molecule type" value="mRNA"/>
</dbReference>
<dbReference type="EMBL" id="BC102700">
    <property type="protein sequence ID" value="AAI02701.1"/>
    <property type="molecule type" value="mRNA"/>
</dbReference>
<dbReference type="PIR" id="S28253">
    <property type="entry name" value="S28253"/>
</dbReference>
<dbReference type="RefSeq" id="NP_787012.1">
    <property type="nucleotide sequence ID" value="NM_175818.4"/>
</dbReference>
<dbReference type="PDB" id="5LC5">
    <property type="method" value="EM"/>
    <property type="resolution" value="4.35 A"/>
    <property type="chains" value="p=77-143"/>
</dbReference>
<dbReference type="PDB" id="5LDW">
    <property type="method" value="EM"/>
    <property type="resolution" value="4.27 A"/>
    <property type="chains" value="p=77-143"/>
</dbReference>
<dbReference type="PDB" id="5LDX">
    <property type="method" value="EM"/>
    <property type="resolution" value="5.60 A"/>
    <property type="chains" value="p=77-143"/>
</dbReference>
<dbReference type="PDB" id="5O31">
    <property type="method" value="EM"/>
    <property type="resolution" value="4.13 A"/>
    <property type="chains" value="p=77-143"/>
</dbReference>
<dbReference type="PDB" id="7DGQ">
    <property type="method" value="EM"/>
    <property type="resolution" value="5.00 A"/>
    <property type="chains" value="g=1-176"/>
</dbReference>
<dbReference type="PDB" id="7DGR">
    <property type="method" value="EM"/>
    <property type="resolution" value="4.60 A"/>
    <property type="chains" value="g=1-176"/>
</dbReference>
<dbReference type="PDB" id="7DGS">
    <property type="method" value="EM"/>
    <property type="resolution" value="7.80 A"/>
    <property type="chains" value="g=1-176"/>
</dbReference>
<dbReference type="PDB" id="7DGZ">
    <property type="method" value="EM"/>
    <property type="resolution" value="3.80 A"/>
    <property type="chains" value="g=1-176"/>
</dbReference>
<dbReference type="PDB" id="7DH0">
    <property type="method" value="EM"/>
    <property type="resolution" value="4.20 A"/>
    <property type="chains" value="g=1-176"/>
</dbReference>
<dbReference type="PDB" id="7DKF">
    <property type="method" value="EM"/>
    <property type="resolution" value="8.30 A"/>
    <property type="chains" value="g2=1-176"/>
</dbReference>
<dbReference type="PDB" id="7QSD">
    <property type="method" value="EM"/>
    <property type="resolution" value="3.10 A"/>
    <property type="chains" value="p=1-176"/>
</dbReference>
<dbReference type="PDB" id="7QSK">
    <property type="method" value="EM"/>
    <property type="resolution" value="2.84 A"/>
    <property type="chains" value="p=1-176"/>
</dbReference>
<dbReference type="PDB" id="7QSL">
    <property type="method" value="EM"/>
    <property type="resolution" value="2.76 A"/>
    <property type="chains" value="p=1-176"/>
</dbReference>
<dbReference type="PDB" id="7QSM">
    <property type="method" value="EM"/>
    <property type="resolution" value="2.30 A"/>
    <property type="chains" value="p=1-176"/>
</dbReference>
<dbReference type="PDB" id="7QSN">
    <property type="method" value="EM"/>
    <property type="resolution" value="2.81 A"/>
    <property type="chains" value="p=1-176"/>
</dbReference>
<dbReference type="PDB" id="7QSO">
    <property type="method" value="EM"/>
    <property type="resolution" value="3.02 A"/>
    <property type="chains" value="p=1-176"/>
</dbReference>
<dbReference type="PDB" id="7R41">
    <property type="method" value="EM"/>
    <property type="resolution" value="2.30 A"/>
    <property type="chains" value="p=1-176"/>
</dbReference>
<dbReference type="PDB" id="7R42">
    <property type="method" value="EM"/>
    <property type="resolution" value="2.30 A"/>
    <property type="chains" value="p=1-176"/>
</dbReference>
<dbReference type="PDB" id="7R43">
    <property type="method" value="EM"/>
    <property type="resolution" value="2.40 A"/>
    <property type="chains" value="p=1-176"/>
</dbReference>
<dbReference type="PDB" id="7R44">
    <property type="method" value="EM"/>
    <property type="resolution" value="2.40 A"/>
    <property type="chains" value="p=1-176"/>
</dbReference>
<dbReference type="PDB" id="7R45">
    <property type="method" value="EM"/>
    <property type="resolution" value="2.40 A"/>
    <property type="chains" value="p=1-176"/>
</dbReference>
<dbReference type="PDB" id="7R46">
    <property type="method" value="EM"/>
    <property type="resolution" value="2.40 A"/>
    <property type="chains" value="p=1-176"/>
</dbReference>
<dbReference type="PDB" id="7R47">
    <property type="method" value="EM"/>
    <property type="resolution" value="2.30 A"/>
    <property type="chains" value="p=1-176"/>
</dbReference>
<dbReference type="PDB" id="7R48">
    <property type="method" value="EM"/>
    <property type="resolution" value="2.30 A"/>
    <property type="chains" value="p=1-176"/>
</dbReference>
<dbReference type="PDB" id="7R4C">
    <property type="method" value="EM"/>
    <property type="resolution" value="2.30 A"/>
    <property type="chains" value="p=1-176"/>
</dbReference>
<dbReference type="PDB" id="7R4D">
    <property type="method" value="EM"/>
    <property type="resolution" value="2.30 A"/>
    <property type="chains" value="p=1-176"/>
</dbReference>
<dbReference type="PDB" id="7R4F">
    <property type="method" value="EM"/>
    <property type="resolution" value="2.40 A"/>
    <property type="chains" value="p=1-176"/>
</dbReference>
<dbReference type="PDB" id="7R4G">
    <property type="method" value="EM"/>
    <property type="resolution" value="2.50 A"/>
    <property type="chains" value="p=1-176"/>
</dbReference>
<dbReference type="PDB" id="8Q0A">
    <property type="method" value="EM"/>
    <property type="resolution" value="3.10 A"/>
    <property type="chains" value="p=1-176"/>
</dbReference>
<dbReference type="PDB" id="8Q0F">
    <property type="method" value="EM"/>
    <property type="resolution" value="3.10 A"/>
    <property type="chains" value="p=1-176"/>
</dbReference>
<dbReference type="PDB" id="8Q0J">
    <property type="method" value="EM"/>
    <property type="resolution" value="3.80 A"/>
    <property type="chains" value="p=1-176"/>
</dbReference>
<dbReference type="PDB" id="8Q0M">
    <property type="method" value="EM"/>
    <property type="resolution" value="3.10 A"/>
    <property type="chains" value="p=1-176"/>
</dbReference>
<dbReference type="PDB" id="8Q0O">
    <property type="method" value="EM"/>
    <property type="resolution" value="3.10 A"/>
    <property type="chains" value="p=1-176"/>
</dbReference>
<dbReference type="PDB" id="8Q0Q">
    <property type="method" value="EM"/>
    <property type="resolution" value="3.60 A"/>
    <property type="chains" value="p=1-176"/>
</dbReference>
<dbReference type="PDB" id="8Q1P">
    <property type="method" value="EM"/>
    <property type="resolution" value="2.90 A"/>
    <property type="chains" value="p=1-176"/>
</dbReference>
<dbReference type="PDB" id="8Q1U">
    <property type="method" value="EM"/>
    <property type="resolution" value="3.30 A"/>
    <property type="chains" value="p=1-176"/>
</dbReference>
<dbReference type="PDB" id="8Q1Y">
    <property type="method" value="EM"/>
    <property type="resolution" value="2.60 A"/>
    <property type="chains" value="p=1-176"/>
</dbReference>
<dbReference type="PDB" id="8Q25">
    <property type="method" value="EM"/>
    <property type="resolution" value="2.80 A"/>
    <property type="chains" value="p=1-176"/>
</dbReference>
<dbReference type="PDB" id="8Q45">
    <property type="method" value="EM"/>
    <property type="resolution" value="2.70 A"/>
    <property type="chains" value="p=1-176"/>
</dbReference>
<dbReference type="PDB" id="8Q46">
    <property type="method" value="EM"/>
    <property type="resolution" value="2.60 A"/>
    <property type="chains" value="p=1-176"/>
</dbReference>
<dbReference type="PDB" id="8Q47">
    <property type="method" value="EM"/>
    <property type="resolution" value="2.90 A"/>
    <property type="chains" value="p=1-176"/>
</dbReference>
<dbReference type="PDB" id="8Q48">
    <property type="method" value="EM"/>
    <property type="resolution" value="2.50 A"/>
    <property type="chains" value="p=1-176"/>
</dbReference>
<dbReference type="PDB" id="8Q49">
    <property type="method" value="EM"/>
    <property type="resolution" value="2.60 A"/>
    <property type="chains" value="p=1-176"/>
</dbReference>
<dbReference type="PDB" id="8Q4A">
    <property type="method" value="EM"/>
    <property type="resolution" value="2.60 A"/>
    <property type="chains" value="p=1-176"/>
</dbReference>
<dbReference type="PDBsum" id="5LC5"/>
<dbReference type="PDBsum" id="5LDW"/>
<dbReference type="PDBsum" id="5LDX"/>
<dbReference type="PDBsum" id="5O31"/>
<dbReference type="PDBsum" id="7DGQ"/>
<dbReference type="PDBsum" id="7DGR"/>
<dbReference type="PDBsum" id="7DGS"/>
<dbReference type="PDBsum" id="7DGZ"/>
<dbReference type="PDBsum" id="7DH0"/>
<dbReference type="PDBsum" id="7DKF"/>
<dbReference type="PDBsum" id="7QSD"/>
<dbReference type="PDBsum" id="7QSK"/>
<dbReference type="PDBsum" id="7QSL"/>
<dbReference type="PDBsum" id="7QSM"/>
<dbReference type="PDBsum" id="7QSN"/>
<dbReference type="PDBsum" id="7QSO"/>
<dbReference type="PDBsum" id="7R41"/>
<dbReference type="PDBsum" id="7R42"/>
<dbReference type="PDBsum" id="7R43"/>
<dbReference type="PDBsum" id="7R44"/>
<dbReference type="PDBsum" id="7R45"/>
<dbReference type="PDBsum" id="7R46"/>
<dbReference type="PDBsum" id="7R47"/>
<dbReference type="PDBsum" id="7R48"/>
<dbReference type="PDBsum" id="7R4C"/>
<dbReference type="PDBsum" id="7R4D"/>
<dbReference type="PDBsum" id="7R4F"/>
<dbReference type="PDBsum" id="7R4G"/>
<dbReference type="PDBsum" id="8Q0A"/>
<dbReference type="PDBsum" id="8Q0F"/>
<dbReference type="PDBsum" id="8Q0J"/>
<dbReference type="PDBsum" id="8Q0M"/>
<dbReference type="PDBsum" id="8Q0O"/>
<dbReference type="PDBsum" id="8Q0Q"/>
<dbReference type="PDBsum" id="8Q1P"/>
<dbReference type="PDBsum" id="8Q1U"/>
<dbReference type="PDBsum" id="8Q1Y"/>
<dbReference type="PDBsum" id="8Q25"/>
<dbReference type="PDBsum" id="8Q45"/>
<dbReference type="PDBsum" id="8Q46"/>
<dbReference type="PDBsum" id="8Q47"/>
<dbReference type="PDBsum" id="8Q48"/>
<dbReference type="PDBsum" id="8Q49"/>
<dbReference type="PDBsum" id="8Q4A"/>
<dbReference type="EMDB" id="EMD-14127"/>
<dbReference type="EMDB" id="EMD-14132"/>
<dbReference type="EMDB" id="EMD-14133"/>
<dbReference type="EMDB" id="EMD-14134"/>
<dbReference type="EMDB" id="EMD-14139"/>
<dbReference type="EMDB" id="EMD-14140"/>
<dbReference type="EMDB" id="EMD-14251"/>
<dbReference type="EMDB" id="EMD-14256"/>
<dbReference type="EMDB" id="EMD-14261"/>
<dbReference type="EMDB" id="EMD-14266"/>
<dbReference type="EMDB" id="EMD-14272"/>
<dbReference type="EMDB" id="EMD-14277"/>
<dbReference type="EMDB" id="EMD-14282"/>
<dbReference type="EMDB" id="EMD-14287"/>
<dbReference type="EMDB" id="EMD-14292"/>
<dbReference type="EMDB" id="EMD-14297"/>
<dbReference type="EMDB" id="EMD-14302"/>
<dbReference type="EMDB" id="EMD-14307"/>
<dbReference type="EMDB" id="EMD-18051"/>
<dbReference type="EMDB" id="EMD-18052"/>
<dbReference type="EMDB" id="EMD-18054"/>
<dbReference type="EMDB" id="EMD-18055"/>
<dbReference type="EMDB" id="EMD-18057"/>
<dbReference type="EMDB" id="EMD-18059"/>
<dbReference type="EMDB" id="EMD-18066"/>
<dbReference type="EMDB" id="EMD-18067"/>
<dbReference type="EMDB" id="EMD-18068"/>
<dbReference type="EMDB" id="EMD-18069"/>
<dbReference type="EMDB" id="EMD-18138"/>
<dbReference type="EMDB" id="EMD-18139"/>
<dbReference type="EMDB" id="EMD-18140"/>
<dbReference type="EMDB" id="EMD-18141"/>
<dbReference type="EMDB" id="EMD-18142"/>
<dbReference type="EMDB" id="EMD-18143"/>
<dbReference type="EMDB" id="EMD-30673"/>
<dbReference type="EMDB" id="EMD-30674"/>
<dbReference type="EMDB" id="EMD-30675"/>
<dbReference type="EMDB" id="EMD-30676"/>
<dbReference type="EMDB" id="EMD-30677"/>
<dbReference type="EMDB" id="EMD-30706"/>
<dbReference type="EMDB" id="EMD-3731"/>
<dbReference type="EMDB" id="EMD-4032"/>
<dbReference type="EMDB" id="EMD-4040"/>
<dbReference type="EMDB" id="EMD-4041"/>
<dbReference type="SMR" id="Q02373"/>
<dbReference type="CORUM" id="Q02373"/>
<dbReference type="DIP" id="DIP-38806N"/>
<dbReference type="FunCoup" id="Q02373">
    <property type="interactions" value="2158"/>
</dbReference>
<dbReference type="IntAct" id="Q02373">
    <property type="interactions" value="2"/>
</dbReference>
<dbReference type="STRING" id="9913.ENSBTAP00000012542"/>
<dbReference type="GlyGen" id="Q02373">
    <property type="glycosylation" value="1 site, 1 O-linked glycan (1 site)"/>
</dbReference>
<dbReference type="PaxDb" id="9913-ENSBTAP00000012542"/>
<dbReference type="Ensembl" id="ENSBTAT00000012542.4">
    <property type="protein sequence ID" value="ENSBTAP00000012542.2"/>
    <property type="gene ID" value="ENSBTAG00000009534.4"/>
</dbReference>
<dbReference type="GeneID" id="327701"/>
<dbReference type="KEGG" id="bta:327701"/>
<dbReference type="CTD" id="4716"/>
<dbReference type="VEuPathDB" id="HostDB:ENSBTAG00000009534"/>
<dbReference type="VGNC" id="VGNC:31960">
    <property type="gene designation" value="NDUFB10"/>
</dbReference>
<dbReference type="eggNOG" id="KOG4009">
    <property type="taxonomic scope" value="Eukaryota"/>
</dbReference>
<dbReference type="GeneTree" id="ENSGT00390000006348"/>
<dbReference type="HOGENOM" id="CLU_112615_1_0_1"/>
<dbReference type="InParanoid" id="Q02373"/>
<dbReference type="OMA" id="CKPILEQ"/>
<dbReference type="OrthoDB" id="6017729at2759"/>
<dbReference type="TreeFam" id="TF105792"/>
<dbReference type="Reactome" id="R-BTA-611105">
    <property type="pathway name" value="Respiratory electron transport"/>
</dbReference>
<dbReference type="Reactome" id="R-BTA-6799198">
    <property type="pathway name" value="Complex I biogenesis"/>
</dbReference>
<dbReference type="Proteomes" id="UP000009136">
    <property type="component" value="Chromosome 25"/>
</dbReference>
<dbReference type="Bgee" id="ENSBTAG00000009534">
    <property type="expression patterns" value="Expressed in laryngeal cartilage and 106 other cell types or tissues"/>
</dbReference>
<dbReference type="GO" id="GO:0005743">
    <property type="term" value="C:mitochondrial inner membrane"/>
    <property type="evidence" value="ECO:0007669"/>
    <property type="project" value="UniProtKB-SubCell"/>
</dbReference>
<dbReference type="GO" id="GO:0005739">
    <property type="term" value="C:mitochondrion"/>
    <property type="evidence" value="ECO:0000305"/>
    <property type="project" value="UniProtKB"/>
</dbReference>
<dbReference type="GO" id="GO:0045271">
    <property type="term" value="C:respiratory chain complex I"/>
    <property type="evidence" value="ECO:0000314"/>
    <property type="project" value="UniProtKB"/>
</dbReference>
<dbReference type="InterPro" id="IPR019377">
    <property type="entry name" value="NADH_UbQ_OxRdtase_su10"/>
</dbReference>
<dbReference type="InterPro" id="IPR039993">
    <property type="entry name" value="NDUFB10"/>
</dbReference>
<dbReference type="PANTHER" id="PTHR13094:SF1">
    <property type="entry name" value="NADH DEHYDROGENASE [UBIQUINONE] 1 BETA SUBCOMPLEX SUBUNIT 10"/>
    <property type="match status" value="1"/>
</dbReference>
<dbReference type="PANTHER" id="PTHR13094">
    <property type="entry name" value="NADH-UBIQUINONE OXIDOREDUCTASE PDSW SUBUNIT"/>
    <property type="match status" value="1"/>
</dbReference>
<dbReference type="Pfam" id="PF10249">
    <property type="entry name" value="NDUFB10"/>
    <property type="match status" value="1"/>
</dbReference>
<protein>
    <recommendedName>
        <fullName>NADH dehydrogenase [ubiquinone] 1 beta subcomplex subunit 10</fullName>
    </recommendedName>
    <alternativeName>
        <fullName>Complex I-PDSW</fullName>
        <shortName>CI-PDSW</shortName>
    </alternativeName>
    <alternativeName>
        <fullName>NADH-ubiquinone oxidoreductase PDSW subunit</fullName>
    </alternativeName>
</protein>
<organism>
    <name type="scientific">Bos taurus</name>
    <name type="common">Bovine</name>
    <dbReference type="NCBI Taxonomy" id="9913"/>
    <lineage>
        <taxon>Eukaryota</taxon>
        <taxon>Metazoa</taxon>
        <taxon>Chordata</taxon>
        <taxon>Craniata</taxon>
        <taxon>Vertebrata</taxon>
        <taxon>Euteleostomi</taxon>
        <taxon>Mammalia</taxon>
        <taxon>Eutheria</taxon>
        <taxon>Laurasiatheria</taxon>
        <taxon>Artiodactyla</taxon>
        <taxon>Ruminantia</taxon>
        <taxon>Pecora</taxon>
        <taxon>Bovidae</taxon>
        <taxon>Bovinae</taxon>
        <taxon>Bos</taxon>
    </lineage>
</organism>
<keyword id="KW-0002">3D-structure</keyword>
<keyword id="KW-0903">Direct protein sequencing</keyword>
<keyword id="KW-0249">Electron transport</keyword>
<keyword id="KW-0472">Membrane</keyword>
<keyword id="KW-0496">Mitochondrion</keyword>
<keyword id="KW-0999">Mitochondrion inner membrane</keyword>
<keyword id="KW-0597">Phosphoprotein</keyword>
<keyword id="KW-1185">Reference proteome</keyword>
<keyword id="KW-0679">Respiratory chain</keyword>
<keyword id="KW-0813">Transport</keyword>
<proteinExistence type="evidence at protein level"/>